<feature type="chain" id="PRO_0000246840" description="7-cyano-7-deazaguanine synthase">
    <location>
        <begin position="1"/>
        <end position="231"/>
    </location>
</feature>
<feature type="binding site" evidence="1">
    <location>
        <begin position="8"/>
        <end position="18"/>
    </location>
    <ligand>
        <name>ATP</name>
        <dbReference type="ChEBI" id="CHEBI:30616"/>
    </ligand>
</feature>
<feature type="binding site" evidence="1">
    <location>
        <position position="188"/>
    </location>
    <ligand>
        <name>Zn(2+)</name>
        <dbReference type="ChEBI" id="CHEBI:29105"/>
    </ligand>
</feature>
<feature type="binding site" evidence="1">
    <location>
        <position position="197"/>
    </location>
    <ligand>
        <name>Zn(2+)</name>
        <dbReference type="ChEBI" id="CHEBI:29105"/>
    </ligand>
</feature>
<feature type="binding site" evidence="1">
    <location>
        <position position="200"/>
    </location>
    <ligand>
        <name>Zn(2+)</name>
        <dbReference type="ChEBI" id="CHEBI:29105"/>
    </ligand>
</feature>
<feature type="binding site" evidence="1">
    <location>
        <position position="203"/>
    </location>
    <ligand>
        <name>Zn(2+)</name>
        <dbReference type="ChEBI" id="CHEBI:29105"/>
    </ligand>
</feature>
<accession>Q1RF91</accession>
<proteinExistence type="inferred from homology"/>
<sequence>MKRAVVVFSGGQDSTTCLVQALQQYDEVHCVTFDYGQRHRAEIDVARELALKLGARAHKVLDVTLLNELAVSSLTRDSIPVPDYEPEADGIPNTFVPGRNILFLTLAAIYAYQVKAEAVITGVCETDFSGYPDCRDEFVKALNHAVSLGMAKDIRFETPLMWIDKAETWALADYYGKLDLVRNETLTCYNGIKGDGCGHCAACNLRANGLNHYLADKPTVMAAMKQKTGLK</sequence>
<protein>
    <recommendedName>
        <fullName evidence="1">7-cyano-7-deazaguanine synthase</fullName>
        <ecNumber evidence="1">6.3.4.20</ecNumber>
    </recommendedName>
    <alternativeName>
        <fullName evidence="1">7-cyano-7-carbaguanine synthase</fullName>
    </alternativeName>
    <alternativeName>
        <fullName evidence="1">PreQ(0) synthase</fullName>
    </alternativeName>
    <alternativeName>
        <fullName evidence="1">Queuosine biosynthesis protein QueC</fullName>
    </alternativeName>
</protein>
<dbReference type="EC" id="6.3.4.20" evidence="1"/>
<dbReference type="EMBL" id="CP000243">
    <property type="protein sequence ID" value="ABE05973.1"/>
    <property type="molecule type" value="Genomic_DNA"/>
</dbReference>
<dbReference type="RefSeq" id="WP_000817227.1">
    <property type="nucleotide sequence ID" value="NZ_CP064825.1"/>
</dbReference>
<dbReference type="SMR" id="Q1RF91"/>
<dbReference type="GeneID" id="86862989"/>
<dbReference type="KEGG" id="eci:UTI89_C0472"/>
<dbReference type="HOGENOM" id="CLU_081854_0_0_6"/>
<dbReference type="UniPathway" id="UPA00391"/>
<dbReference type="Proteomes" id="UP000001952">
    <property type="component" value="Chromosome"/>
</dbReference>
<dbReference type="GO" id="GO:0005524">
    <property type="term" value="F:ATP binding"/>
    <property type="evidence" value="ECO:0007669"/>
    <property type="project" value="UniProtKB-UniRule"/>
</dbReference>
<dbReference type="GO" id="GO:0016879">
    <property type="term" value="F:ligase activity, forming carbon-nitrogen bonds"/>
    <property type="evidence" value="ECO:0007669"/>
    <property type="project" value="UniProtKB-UniRule"/>
</dbReference>
<dbReference type="GO" id="GO:0008270">
    <property type="term" value="F:zinc ion binding"/>
    <property type="evidence" value="ECO:0007669"/>
    <property type="project" value="UniProtKB-UniRule"/>
</dbReference>
<dbReference type="GO" id="GO:0008616">
    <property type="term" value="P:queuosine biosynthetic process"/>
    <property type="evidence" value="ECO:0007669"/>
    <property type="project" value="UniProtKB-UniRule"/>
</dbReference>
<dbReference type="CDD" id="cd01995">
    <property type="entry name" value="QueC-like"/>
    <property type="match status" value="1"/>
</dbReference>
<dbReference type="FunFam" id="3.40.50.620:FF:000017">
    <property type="entry name" value="7-cyano-7-deazaguanine synthase"/>
    <property type="match status" value="1"/>
</dbReference>
<dbReference type="Gene3D" id="3.40.50.620">
    <property type="entry name" value="HUPs"/>
    <property type="match status" value="1"/>
</dbReference>
<dbReference type="HAMAP" id="MF_01633">
    <property type="entry name" value="QueC"/>
    <property type="match status" value="1"/>
</dbReference>
<dbReference type="InterPro" id="IPR018317">
    <property type="entry name" value="QueC"/>
</dbReference>
<dbReference type="InterPro" id="IPR014729">
    <property type="entry name" value="Rossmann-like_a/b/a_fold"/>
</dbReference>
<dbReference type="NCBIfam" id="TIGR00364">
    <property type="entry name" value="7-cyano-7-deazaguanine synthase QueC"/>
    <property type="match status" value="1"/>
</dbReference>
<dbReference type="NCBIfam" id="NF008317">
    <property type="entry name" value="PRK11106.1"/>
    <property type="match status" value="1"/>
</dbReference>
<dbReference type="PANTHER" id="PTHR42914">
    <property type="entry name" value="7-CYANO-7-DEAZAGUANINE SYNTHASE"/>
    <property type="match status" value="1"/>
</dbReference>
<dbReference type="PANTHER" id="PTHR42914:SF1">
    <property type="entry name" value="7-CYANO-7-DEAZAGUANINE SYNTHASE"/>
    <property type="match status" value="1"/>
</dbReference>
<dbReference type="Pfam" id="PF06508">
    <property type="entry name" value="QueC"/>
    <property type="match status" value="1"/>
</dbReference>
<dbReference type="PIRSF" id="PIRSF006293">
    <property type="entry name" value="ExsB"/>
    <property type="match status" value="1"/>
</dbReference>
<dbReference type="SUPFAM" id="SSF52402">
    <property type="entry name" value="Adenine nucleotide alpha hydrolases-like"/>
    <property type="match status" value="1"/>
</dbReference>
<reference key="1">
    <citation type="journal article" date="2006" name="Proc. Natl. Acad. Sci. U.S.A.">
        <title>Identification of genes subject to positive selection in uropathogenic strains of Escherichia coli: a comparative genomics approach.</title>
        <authorList>
            <person name="Chen S.L."/>
            <person name="Hung C.-S."/>
            <person name="Xu J."/>
            <person name="Reigstad C.S."/>
            <person name="Magrini V."/>
            <person name="Sabo A."/>
            <person name="Blasiar D."/>
            <person name="Bieri T."/>
            <person name="Meyer R.R."/>
            <person name="Ozersky P."/>
            <person name="Armstrong J.R."/>
            <person name="Fulton R.S."/>
            <person name="Latreille J.P."/>
            <person name="Spieth J."/>
            <person name="Hooton T.M."/>
            <person name="Mardis E.R."/>
            <person name="Hultgren S.J."/>
            <person name="Gordon J.I."/>
        </authorList>
    </citation>
    <scope>NUCLEOTIDE SEQUENCE [LARGE SCALE GENOMIC DNA]</scope>
    <source>
        <strain>UTI89 / UPEC</strain>
    </source>
</reference>
<organism>
    <name type="scientific">Escherichia coli (strain UTI89 / UPEC)</name>
    <dbReference type="NCBI Taxonomy" id="364106"/>
    <lineage>
        <taxon>Bacteria</taxon>
        <taxon>Pseudomonadati</taxon>
        <taxon>Pseudomonadota</taxon>
        <taxon>Gammaproteobacteria</taxon>
        <taxon>Enterobacterales</taxon>
        <taxon>Enterobacteriaceae</taxon>
        <taxon>Escherichia</taxon>
    </lineage>
</organism>
<comment type="function">
    <text evidence="1">Catalyzes the ATP-dependent conversion of 7-carboxy-7-deazaguanine (CDG) to 7-cyano-7-deazaguanine (preQ(0)).</text>
</comment>
<comment type="catalytic activity">
    <reaction evidence="1">
        <text>7-carboxy-7-deazaguanine + NH4(+) + ATP = 7-cyano-7-deazaguanine + ADP + phosphate + H2O + H(+)</text>
        <dbReference type="Rhea" id="RHEA:27982"/>
        <dbReference type="ChEBI" id="CHEBI:15377"/>
        <dbReference type="ChEBI" id="CHEBI:15378"/>
        <dbReference type="ChEBI" id="CHEBI:28938"/>
        <dbReference type="ChEBI" id="CHEBI:30616"/>
        <dbReference type="ChEBI" id="CHEBI:43474"/>
        <dbReference type="ChEBI" id="CHEBI:45075"/>
        <dbReference type="ChEBI" id="CHEBI:61036"/>
        <dbReference type="ChEBI" id="CHEBI:456216"/>
        <dbReference type="EC" id="6.3.4.20"/>
    </reaction>
</comment>
<comment type="cofactor">
    <cofactor evidence="1">
        <name>Zn(2+)</name>
        <dbReference type="ChEBI" id="CHEBI:29105"/>
    </cofactor>
    <text evidence="1">Binds 1 zinc ion per subunit.</text>
</comment>
<comment type="pathway">
    <text evidence="1">Purine metabolism; 7-cyano-7-deazaguanine biosynthesis.</text>
</comment>
<comment type="similarity">
    <text evidence="1">Belongs to the QueC family.</text>
</comment>
<gene>
    <name evidence="1" type="primary">queC</name>
    <name type="ordered locus">UTI89_C0472</name>
</gene>
<keyword id="KW-0067">ATP-binding</keyword>
<keyword id="KW-0436">Ligase</keyword>
<keyword id="KW-0479">Metal-binding</keyword>
<keyword id="KW-0547">Nucleotide-binding</keyword>
<keyword id="KW-0671">Queuosine biosynthesis</keyword>
<keyword id="KW-0862">Zinc</keyword>
<evidence type="ECO:0000255" key="1">
    <source>
        <dbReference type="HAMAP-Rule" id="MF_01633"/>
    </source>
</evidence>
<name>QUEC_ECOUT</name>